<feature type="chain" id="PRO_0000438476" description="Metal transporter cnnm-4" evidence="6">
    <location>
        <begin position="1"/>
        <end position="467"/>
    </location>
</feature>
<feature type="topological domain" description="Extracellular" evidence="6">
    <location>
        <begin position="1"/>
        <end position="110"/>
    </location>
</feature>
<feature type="transmembrane region" description="Helical" evidence="1">
    <location>
        <begin position="111"/>
        <end position="131"/>
    </location>
</feature>
<feature type="topological domain" description="Cytoplasmic" evidence="6">
    <location>
        <begin position="132"/>
        <end position="170"/>
    </location>
</feature>
<feature type="transmembrane region" description="Helical" evidence="1">
    <location>
        <begin position="171"/>
        <end position="191"/>
    </location>
</feature>
<feature type="topological domain" description="Extracellular" evidence="6">
    <location>
        <begin position="192"/>
        <end position="196"/>
    </location>
</feature>
<feature type="transmembrane region" description="Helical" evidence="1">
    <location>
        <begin position="197"/>
        <end position="217"/>
    </location>
</feature>
<feature type="topological domain" description="Cytoplasmic" evidence="6">
    <location>
        <begin position="218"/>
        <end position="238"/>
    </location>
</feature>
<feature type="transmembrane region" description="Helical" evidence="1">
    <location>
        <begin position="239"/>
        <end position="259"/>
    </location>
</feature>
<feature type="topological domain" description="Extracellular" evidence="6">
    <location>
        <begin position="260"/>
        <end position="467"/>
    </location>
</feature>
<feature type="domain" description="CNNM transmembrane" evidence="4">
    <location>
        <begin position="107"/>
        <end position="293"/>
    </location>
</feature>
<feature type="domain" description="CBS 1" evidence="3">
    <location>
        <begin position="317"/>
        <end position="381"/>
    </location>
</feature>
<feature type="domain" description="CBS 2" evidence="3">
    <location>
        <begin position="394"/>
        <end position="461"/>
    </location>
</feature>
<feature type="glycosylation site" description="N-linked (GlcNAc...) asparagine" evidence="2">
    <location>
        <position position="61"/>
    </location>
</feature>
<feature type="glycosylation site" description="N-linked (GlcNAc...) asparagine" evidence="2">
    <location>
        <position position="364"/>
    </location>
</feature>
<keyword id="KW-0129">CBS domain</keyword>
<keyword id="KW-1003">Cell membrane</keyword>
<keyword id="KW-0325">Glycoprotein</keyword>
<keyword id="KW-0406">Ion transport</keyword>
<keyword id="KW-0472">Membrane</keyword>
<keyword id="KW-1185">Reference proteome</keyword>
<keyword id="KW-0677">Repeat</keyword>
<keyword id="KW-0812">Transmembrane</keyword>
<keyword id="KW-1133">Transmembrane helix</keyword>
<keyword id="KW-0813">Transport</keyword>
<proteinExistence type="inferred from homology"/>
<sequence length="467" mass="53072">MELYAAGRYDSEPFKMNEHDIIQLYGEDVQYVKNAFLSSDSTCNNNVYSLEEHELDDDKKNLSGVLVEYKIKISLLQSSDGVKHLFFCTNPKSVDIARMLEIPEGKDKTRVYFMMPLLVLCLGLSATFSGLNLAIMSFSINDLKLIQESDSDKLMKQRAMDVMRLRRNSNFVLVTIIFGNCFCNISITLLMNYFAEFYGFGGFIFVELISTALLLIFTEILPSLIFTKNALAIASRLQYFVIFTMCITSPISYPLAMLLNIILGKENADDSAPLDLDALQIDELEDEEAADGNNFHEMMSVVKKTIKLREKLASDVMTEIDKVGMYSEHQQVTHSFLLDAYEQGHSRLPVYEGETRNKIRGVLNITDMMLLMDDEGRGSDTDLTLGTMLSVLEKRRKHCFVLDTMPVEHFMSELQQGCPMAIVVRYKEVDSEEDGTEIYEVCGIVTLEDCIEEILGEIFDEKDARQE</sequence>
<name>CNNM4_CAEEL</name>
<organism evidence="8">
    <name type="scientific">Caenorhabditis elegans</name>
    <dbReference type="NCBI Taxonomy" id="6239"/>
    <lineage>
        <taxon>Eukaryota</taxon>
        <taxon>Metazoa</taxon>
        <taxon>Ecdysozoa</taxon>
        <taxon>Nematoda</taxon>
        <taxon>Chromadorea</taxon>
        <taxon>Rhabditida</taxon>
        <taxon>Rhabditina</taxon>
        <taxon>Rhabditomorpha</taxon>
        <taxon>Rhabditoidea</taxon>
        <taxon>Rhabditidae</taxon>
        <taxon>Peloderinae</taxon>
        <taxon>Caenorhabditis</taxon>
    </lineage>
</organism>
<gene>
    <name evidence="9" type="primary">cnnm-4</name>
    <name evidence="9" type="ORF">C01H6.6</name>
</gene>
<reference evidence="8" key="1">
    <citation type="journal article" date="1998" name="Science">
        <title>Genome sequence of the nematode C. elegans: a platform for investigating biology.</title>
        <authorList>
            <consortium name="The C. elegans sequencing consortium"/>
        </authorList>
    </citation>
    <scope>NUCLEOTIDE SEQUENCE [LARGE SCALE GENOMIC DNA]</scope>
    <source>
        <strain evidence="8">Bristol N2</strain>
    </source>
</reference>
<reference evidence="6" key="2">
    <citation type="journal article" date="2016" name="PLoS Genet.">
        <title>Mg2+ extrusion from intestinal epithelia by CNNM proteins is essential for gonadogenesis via AMPK-TORC1 signaling in Caenorhabditis elegans.</title>
        <authorList>
            <person name="Ishii T."/>
            <person name="Funato Y."/>
            <person name="Hashizume O."/>
            <person name="Yamazaki D."/>
            <person name="Hirata Y."/>
            <person name="Nishiwaki K."/>
            <person name="Kono N."/>
            <person name="Arai H."/>
            <person name="Miki H."/>
        </authorList>
    </citation>
    <scope>FUNCTION</scope>
    <scope>DISRUPTION PHENOTYPE</scope>
</reference>
<comment type="function">
    <text evidence="7">Probable metal transporter. Probably acts redundantly with the other metal transport proteins cnnm-1, cnnm-2, cnnm-3 and cnnm-5 to regulate Mg(2+) homeostasis.</text>
</comment>
<comment type="subcellular location">
    <subcellularLocation>
        <location evidence="6">Cell membrane</location>
        <topology evidence="1">Multi-pass membrane protein</topology>
    </subcellularLocation>
</comment>
<comment type="disruption phenotype">
    <text evidence="5">No visible phenotype. Quintuple knockout with cnnm-1, cnnm-2, cnnm-3 and cnnm-5 results in a reduced lifespan and 100% sterility.</text>
</comment>
<comment type="similarity">
    <text evidence="6">Belongs to the ACDP family.</text>
</comment>
<dbReference type="EMBL" id="BX284601">
    <property type="protein sequence ID" value="CAA95784.3"/>
    <property type="molecule type" value="Genomic_DNA"/>
</dbReference>
<dbReference type="PIR" id="T18850">
    <property type="entry name" value="T18850"/>
</dbReference>
<dbReference type="RefSeq" id="NP_001379128.1">
    <property type="nucleotide sequence ID" value="NM_001392521.1"/>
</dbReference>
<dbReference type="RefSeq" id="NP_492040.3">
    <property type="nucleotide sequence ID" value="NM_059639.3"/>
</dbReference>
<dbReference type="SMR" id="Q17586"/>
<dbReference type="FunCoup" id="Q17586">
    <property type="interactions" value="77"/>
</dbReference>
<dbReference type="STRING" id="6239.C01H6.6.1"/>
<dbReference type="GlyCosmos" id="Q17586">
    <property type="glycosylation" value="2 sites, No reported glycans"/>
</dbReference>
<dbReference type="PaxDb" id="6239-C01H6.6.2"/>
<dbReference type="EnsemblMetazoa" id="C01H6.6.1">
    <property type="protein sequence ID" value="C01H6.6.1"/>
    <property type="gene ID" value="WBGene00007255"/>
</dbReference>
<dbReference type="GeneID" id="182093"/>
<dbReference type="UCSC" id="C01H6.6">
    <property type="organism name" value="c. elegans"/>
</dbReference>
<dbReference type="AGR" id="WB:WBGene00007255"/>
<dbReference type="WormBase" id="C01H6.6">
    <property type="protein sequence ID" value="CE50057"/>
    <property type="gene ID" value="WBGene00007255"/>
    <property type="gene designation" value="cnnm-4"/>
</dbReference>
<dbReference type="eggNOG" id="KOG2118">
    <property type="taxonomic scope" value="Eukaryota"/>
</dbReference>
<dbReference type="HOGENOM" id="CLU_467891_0_0_1"/>
<dbReference type="InParanoid" id="Q17586"/>
<dbReference type="OMA" id="QILVWIC"/>
<dbReference type="OrthoDB" id="5353557at2759"/>
<dbReference type="PRO" id="PR:Q17586"/>
<dbReference type="Proteomes" id="UP000001940">
    <property type="component" value="Chromosome I"/>
</dbReference>
<dbReference type="Bgee" id="WBGene00007255">
    <property type="expression patterns" value="Expressed in adult organism and 2 other cell types or tissues"/>
</dbReference>
<dbReference type="GO" id="GO:0005886">
    <property type="term" value="C:plasma membrane"/>
    <property type="evidence" value="ECO:0000318"/>
    <property type="project" value="GO_Central"/>
</dbReference>
<dbReference type="GO" id="GO:0022857">
    <property type="term" value="F:transmembrane transporter activity"/>
    <property type="evidence" value="ECO:0000318"/>
    <property type="project" value="GO_Central"/>
</dbReference>
<dbReference type="GO" id="GO:0008340">
    <property type="term" value="P:determination of adult lifespan"/>
    <property type="evidence" value="ECO:0000316"/>
    <property type="project" value="UniProtKB"/>
</dbReference>
<dbReference type="GO" id="GO:0010960">
    <property type="term" value="P:magnesium ion homeostasis"/>
    <property type="evidence" value="ECO:0000318"/>
    <property type="project" value="GO_Central"/>
</dbReference>
<dbReference type="GO" id="GO:0006811">
    <property type="term" value="P:monoatomic ion transport"/>
    <property type="evidence" value="ECO:0007669"/>
    <property type="project" value="UniProtKB-KW"/>
</dbReference>
<dbReference type="GO" id="GO:1905941">
    <property type="term" value="P:positive regulation of gonad development"/>
    <property type="evidence" value="ECO:0000316"/>
    <property type="project" value="UniProtKB"/>
</dbReference>
<dbReference type="CDD" id="cd04590">
    <property type="entry name" value="CBS_pair_CorC_HlyC_assoc"/>
    <property type="match status" value="1"/>
</dbReference>
<dbReference type="Gene3D" id="3.10.580.10">
    <property type="entry name" value="CBS-domain"/>
    <property type="match status" value="1"/>
</dbReference>
<dbReference type="InterPro" id="IPR045095">
    <property type="entry name" value="ACDP"/>
</dbReference>
<dbReference type="InterPro" id="IPR046342">
    <property type="entry name" value="CBS_dom_sf"/>
</dbReference>
<dbReference type="InterPro" id="IPR002550">
    <property type="entry name" value="CNNM"/>
</dbReference>
<dbReference type="InterPro" id="IPR044751">
    <property type="entry name" value="Ion_transp-like_CBS"/>
</dbReference>
<dbReference type="PANTHER" id="PTHR12064">
    <property type="entry name" value="METAL TRANSPORTER CNNM"/>
    <property type="match status" value="1"/>
</dbReference>
<dbReference type="PANTHER" id="PTHR12064:SF4">
    <property type="entry name" value="METAL TRANSPORTER CNNM-4"/>
    <property type="match status" value="1"/>
</dbReference>
<dbReference type="Pfam" id="PF01595">
    <property type="entry name" value="CNNM"/>
    <property type="match status" value="1"/>
</dbReference>
<dbReference type="SUPFAM" id="SSF54631">
    <property type="entry name" value="CBS-domain pair"/>
    <property type="match status" value="1"/>
</dbReference>
<dbReference type="PROSITE" id="PS51371">
    <property type="entry name" value="CBS"/>
    <property type="match status" value="2"/>
</dbReference>
<dbReference type="PROSITE" id="PS51846">
    <property type="entry name" value="CNNM"/>
    <property type="match status" value="1"/>
</dbReference>
<protein>
    <recommendedName>
        <fullName evidence="6">Metal transporter cnnm-4</fullName>
    </recommendedName>
    <alternativeName>
        <fullName evidence="9">CNNM family homolog 4</fullName>
    </alternativeName>
</protein>
<evidence type="ECO:0000255" key="1"/>
<evidence type="ECO:0000255" key="2">
    <source>
        <dbReference type="PROSITE-ProRule" id="PRU00498"/>
    </source>
</evidence>
<evidence type="ECO:0000255" key="3">
    <source>
        <dbReference type="PROSITE-ProRule" id="PRU00703"/>
    </source>
</evidence>
<evidence type="ECO:0000255" key="4">
    <source>
        <dbReference type="PROSITE-ProRule" id="PRU01193"/>
    </source>
</evidence>
<evidence type="ECO:0000269" key="5">
    <source>
    </source>
</evidence>
<evidence type="ECO:0000305" key="6"/>
<evidence type="ECO:0000305" key="7">
    <source>
    </source>
</evidence>
<evidence type="ECO:0000312" key="8">
    <source>
        <dbReference type="Proteomes" id="UP000001940"/>
    </source>
</evidence>
<evidence type="ECO:0000312" key="9">
    <source>
        <dbReference type="WormBase" id="C01H6.6"/>
    </source>
</evidence>
<accession>Q17586</accession>